<comment type="function">
    <text evidence="1">Forms part of the ribosomal stalk which helps the ribosome interact with GTP-bound translation factors.</text>
</comment>
<comment type="subunit">
    <text evidence="1">Part of the ribosomal stalk of the 50S ribosomal subunit. Interacts with L10 and the large rRNA to form the base of the stalk. L10 forms an elongated spine to which L12 dimers bind in a sequential fashion forming a multimeric L10(L12)X complex.</text>
</comment>
<comment type="PTM">
    <text evidence="1">One or more lysine residues are methylated.</text>
</comment>
<comment type="similarity">
    <text evidence="1">Belongs to the universal ribosomal protein uL11 family.</text>
</comment>
<name>RL11_THEP3</name>
<proteinExistence type="inferred from homology"/>
<reference key="1">
    <citation type="submission" date="2008-01" db="EMBL/GenBank/DDBJ databases">
        <title>Complete sequence of Thermoanaerobacter pseudethanolicus 39E.</title>
        <authorList>
            <person name="Copeland A."/>
            <person name="Lucas S."/>
            <person name="Lapidus A."/>
            <person name="Barry K."/>
            <person name="Glavina del Rio T."/>
            <person name="Dalin E."/>
            <person name="Tice H."/>
            <person name="Pitluck S."/>
            <person name="Bruce D."/>
            <person name="Goodwin L."/>
            <person name="Saunders E."/>
            <person name="Brettin T."/>
            <person name="Detter J.C."/>
            <person name="Han C."/>
            <person name="Schmutz J."/>
            <person name="Larimer F."/>
            <person name="Land M."/>
            <person name="Hauser L."/>
            <person name="Kyrpides N."/>
            <person name="Lykidis A."/>
            <person name="Hemme C."/>
            <person name="Fields M.W."/>
            <person name="He Z."/>
            <person name="Zhou J."/>
            <person name="Richardson P."/>
        </authorList>
    </citation>
    <scope>NUCLEOTIDE SEQUENCE [LARGE SCALE GENOMIC DNA]</scope>
    <source>
        <strain>ATCC 33223 / DSM 2355 / 39E</strain>
    </source>
</reference>
<evidence type="ECO:0000255" key="1">
    <source>
        <dbReference type="HAMAP-Rule" id="MF_00736"/>
    </source>
</evidence>
<evidence type="ECO:0000305" key="2"/>
<organism>
    <name type="scientific">Thermoanaerobacter pseudethanolicus (strain ATCC 33223 / 39E)</name>
    <name type="common">Clostridium thermohydrosulfuricum</name>
    <dbReference type="NCBI Taxonomy" id="340099"/>
    <lineage>
        <taxon>Bacteria</taxon>
        <taxon>Bacillati</taxon>
        <taxon>Bacillota</taxon>
        <taxon>Clostridia</taxon>
        <taxon>Thermoanaerobacterales</taxon>
        <taxon>Thermoanaerobacteraceae</taxon>
        <taxon>Thermoanaerobacter</taxon>
    </lineage>
</organism>
<keyword id="KW-0488">Methylation</keyword>
<keyword id="KW-1185">Reference proteome</keyword>
<keyword id="KW-0687">Ribonucleoprotein</keyword>
<keyword id="KW-0689">Ribosomal protein</keyword>
<keyword id="KW-0694">RNA-binding</keyword>
<keyword id="KW-0699">rRNA-binding</keyword>
<feature type="chain" id="PRO_1000195735" description="Large ribosomal subunit protein uL11">
    <location>
        <begin position="1"/>
        <end position="140"/>
    </location>
</feature>
<sequence>MAKKVAAVVKIQLPAGKATPAPPVGTALGPHGVNIMAFCKEFNERTAKDAGLIIPVVITIYADRSFSFITKTPPAAVLLKKAAGIESGSPQPNKQKVGKITREQLREIAEIKMKDLNASDIEAAMRMIAGTARSMGIEIV</sequence>
<dbReference type="EMBL" id="CP000924">
    <property type="protein sequence ID" value="ABY94031.1"/>
    <property type="molecule type" value="Genomic_DNA"/>
</dbReference>
<dbReference type="RefSeq" id="WP_003868695.1">
    <property type="nucleotide sequence ID" value="NC_010321.1"/>
</dbReference>
<dbReference type="SMR" id="B0KCI8"/>
<dbReference type="STRING" id="340099.Teth39_0362"/>
<dbReference type="KEGG" id="tpd:Teth39_0362"/>
<dbReference type="eggNOG" id="COG0080">
    <property type="taxonomic scope" value="Bacteria"/>
</dbReference>
<dbReference type="HOGENOM" id="CLU_074237_2_1_9"/>
<dbReference type="Proteomes" id="UP000002156">
    <property type="component" value="Chromosome"/>
</dbReference>
<dbReference type="GO" id="GO:0022625">
    <property type="term" value="C:cytosolic large ribosomal subunit"/>
    <property type="evidence" value="ECO:0007669"/>
    <property type="project" value="TreeGrafter"/>
</dbReference>
<dbReference type="GO" id="GO:0070180">
    <property type="term" value="F:large ribosomal subunit rRNA binding"/>
    <property type="evidence" value="ECO:0007669"/>
    <property type="project" value="UniProtKB-UniRule"/>
</dbReference>
<dbReference type="GO" id="GO:0003735">
    <property type="term" value="F:structural constituent of ribosome"/>
    <property type="evidence" value="ECO:0007669"/>
    <property type="project" value="InterPro"/>
</dbReference>
<dbReference type="GO" id="GO:0006412">
    <property type="term" value="P:translation"/>
    <property type="evidence" value="ECO:0007669"/>
    <property type="project" value="UniProtKB-UniRule"/>
</dbReference>
<dbReference type="CDD" id="cd00349">
    <property type="entry name" value="Ribosomal_L11"/>
    <property type="match status" value="1"/>
</dbReference>
<dbReference type="FunFam" id="1.10.10.250:FF:000001">
    <property type="entry name" value="50S ribosomal protein L11"/>
    <property type="match status" value="1"/>
</dbReference>
<dbReference type="FunFam" id="3.30.1550.10:FF:000001">
    <property type="entry name" value="50S ribosomal protein L11"/>
    <property type="match status" value="1"/>
</dbReference>
<dbReference type="Gene3D" id="1.10.10.250">
    <property type="entry name" value="Ribosomal protein L11, C-terminal domain"/>
    <property type="match status" value="1"/>
</dbReference>
<dbReference type="Gene3D" id="3.30.1550.10">
    <property type="entry name" value="Ribosomal protein L11/L12, N-terminal domain"/>
    <property type="match status" value="1"/>
</dbReference>
<dbReference type="HAMAP" id="MF_00736">
    <property type="entry name" value="Ribosomal_uL11"/>
    <property type="match status" value="1"/>
</dbReference>
<dbReference type="InterPro" id="IPR000911">
    <property type="entry name" value="Ribosomal_uL11"/>
</dbReference>
<dbReference type="InterPro" id="IPR006519">
    <property type="entry name" value="Ribosomal_uL11_bac-typ"/>
</dbReference>
<dbReference type="InterPro" id="IPR020783">
    <property type="entry name" value="Ribosomal_uL11_C"/>
</dbReference>
<dbReference type="InterPro" id="IPR036769">
    <property type="entry name" value="Ribosomal_uL11_C_sf"/>
</dbReference>
<dbReference type="InterPro" id="IPR020784">
    <property type="entry name" value="Ribosomal_uL11_N"/>
</dbReference>
<dbReference type="InterPro" id="IPR036796">
    <property type="entry name" value="Ribosomal_uL11_N_sf"/>
</dbReference>
<dbReference type="NCBIfam" id="TIGR01632">
    <property type="entry name" value="L11_bact"/>
    <property type="match status" value="1"/>
</dbReference>
<dbReference type="PANTHER" id="PTHR11661">
    <property type="entry name" value="60S RIBOSOMAL PROTEIN L12"/>
    <property type="match status" value="1"/>
</dbReference>
<dbReference type="PANTHER" id="PTHR11661:SF1">
    <property type="entry name" value="LARGE RIBOSOMAL SUBUNIT PROTEIN UL11M"/>
    <property type="match status" value="1"/>
</dbReference>
<dbReference type="Pfam" id="PF00298">
    <property type="entry name" value="Ribosomal_L11"/>
    <property type="match status" value="1"/>
</dbReference>
<dbReference type="Pfam" id="PF03946">
    <property type="entry name" value="Ribosomal_L11_N"/>
    <property type="match status" value="1"/>
</dbReference>
<dbReference type="SMART" id="SM00649">
    <property type="entry name" value="RL11"/>
    <property type="match status" value="1"/>
</dbReference>
<dbReference type="SUPFAM" id="SSF54747">
    <property type="entry name" value="Ribosomal L11/L12e N-terminal domain"/>
    <property type="match status" value="1"/>
</dbReference>
<dbReference type="SUPFAM" id="SSF46906">
    <property type="entry name" value="Ribosomal protein L11, C-terminal domain"/>
    <property type="match status" value="1"/>
</dbReference>
<accession>B0KCI8</accession>
<protein>
    <recommendedName>
        <fullName evidence="1">Large ribosomal subunit protein uL11</fullName>
    </recommendedName>
    <alternativeName>
        <fullName evidence="2">50S ribosomal protein L11</fullName>
    </alternativeName>
</protein>
<gene>
    <name evidence="1" type="primary">rplK</name>
    <name type="ordered locus">Teth39_0362</name>
</gene>